<proteinExistence type="inferred from homology"/>
<reference key="1">
    <citation type="journal article" date="2009" name="Genome Res.">
        <title>Comparative genomics of protoploid Saccharomycetaceae.</title>
        <authorList>
            <consortium name="The Genolevures Consortium"/>
            <person name="Souciet J.-L."/>
            <person name="Dujon B."/>
            <person name="Gaillardin C."/>
            <person name="Johnston M."/>
            <person name="Baret P.V."/>
            <person name="Cliften P."/>
            <person name="Sherman D.J."/>
            <person name="Weissenbach J."/>
            <person name="Westhof E."/>
            <person name="Wincker P."/>
            <person name="Jubin C."/>
            <person name="Poulain J."/>
            <person name="Barbe V."/>
            <person name="Segurens B."/>
            <person name="Artiguenave F."/>
            <person name="Anthouard V."/>
            <person name="Vacherie B."/>
            <person name="Val M.-E."/>
            <person name="Fulton R.S."/>
            <person name="Minx P."/>
            <person name="Wilson R."/>
            <person name="Durrens P."/>
            <person name="Jean G."/>
            <person name="Marck C."/>
            <person name="Martin T."/>
            <person name="Nikolski M."/>
            <person name="Rolland T."/>
            <person name="Seret M.-L."/>
            <person name="Casaregola S."/>
            <person name="Despons L."/>
            <person name="Fairhead C."/>
            <person name="Fischer G."/>
            <person name="Lafontaine I."/>
            <person name="Leh V."/>
            <person name="Lemaire M."/>
            <person name="de Montigny J."/>
            <person name="Neuveglise C."/>
            <person name="Thierry A."/>
            <person name="Blanc-Lenfle I."/>
            <person name="Bleykasten C."/>
            <person name="Diffels J."/>
            <person name="Fritsch E."/>
            <person name="Frangeul L."/>
            <person name="Goeffon A."/>
            <person name="Jauniaux N."/>
            <person name="Kachouri-Lafond R."/>
            <person name="Payen C."/>
            <person name="Potier S."/>
            <person name="Pribylova L."/>
            <person name="Ozanne C."/>
            <person name="Richard G.-F."/>
            <person name="Sacerdot C."/>
            <person name="Straub M.-L."/>
            <person name="Talla E."/>
        </authorList>
    </citation>
    <scope>NUCLEOTIDE SEQUENCE [LARGE SCALE GENOMIC DNA]</scope>
    <source>
        <strain>ATCC 2623 / CBS 732 / BCRC 21506 / NBRC 1130 / NCYC 568 / NRRL Y-229</strain>
    </source>
</reference>
<dbReference type="EMBL" id="CU928181">
    <property type="protein sequence ID" value="CAR30938.1"/>
    <property type="molecule type" value="Genomic_DNA"/>
</dbReference>
<dbReference type="RefSeq" id="XP_002499193.1">
    <property type="nucleotide sequence ID" value="XM_002499148.1"/>
</dbReference>
<dbReference type="SMR" id="C5E4H7"/>
<dbReference type="FunCoup" id="C5E4H7">
    <property type="interactions" value="213"/>
</dbReference>
<dbReference type="STRING" id="559307.C5E4H7"/>
<dbReference type="GeneID" id="8204747"/>
<dbReference type="KEGG" id="zro:ZYRO0E06226g"/>
<dbReference type="HOGENOM" id="CLU_056211_0_0_1"/>
<dbReference type="InParanoid" id="C5E4H7"/>
<dbReference type="Proteomes" id="UP000008536">
    <property type="component" value="Chromosome E"/>
</dbReference>
<dbReference type="GO" id="GO:0005737">
    <property type="term" value="C:cytoplasm"/>
    <property type="evidence" value="ECO:0007669"/>
    <property type="project" value="UniProtKB-KW"/>
</dbReference>
<dbReference type="GO" id="GO:0005634">
    <property type="term" value="C:nucleus"/>
    <property type="evidence" value="ECO:0007669"/>
    <property type="project" value="UniProtKB-SubCell"/>
</dbReference>
<dbReference type="GO" id="GO:0005816">
    <property type="term" value="C:spindle pole body"/>
    <property type="evidence" value="ECO:0007669"/>
    <property type="project" value="UniProtKB-SubCell"/>
</dbReference>
<dbReference type="Gene3D" id="1.20.5.1180">
    <property type="entry name" value="Geminin coiled-coil domain"/>
    <property type="match status" value="1"/>
</dbReference>
<dbReference type="InterPro" id="IPR021611">
    <property type="entry name" value="Spc42"/>
</dbReference>
<dbReference type="Pfam" id="PF11544">
    <property type="entry name" value="Spc42p"/>
    <property type="match status" value="1"/>
</dbReference>
<evidence type="ECO:0000250" key="1"/>
<evidence type="ECO:0000255" key="2"/>
<evidence type="ECO:0000256" key="3">
    <source>
        <dbReference type="SAM" id="MobiDB-lite"/>
    </source>
</evidence>
<evidence type="ECO:0000305" key="4"/>
<feature type="chain" id="PRO_0000409219" description="Spindle pole body component SPC42">
    <location>
        <begin position="1"/>
        <end position="373"/>
    </location>
</feature>
<feature type="region of interest" description="Disordered" evidence="3">
    <location>
        <begin position="104"/>
        <end position="151"/>
    </location>
</feature>
<feature type="region of interest" description="Disordered" evidence="3">
    <location>
        <begin position="169"/>
        <end position="216"/>
    </location>
</feature>
<feature type="region of interest" description="Disordered" evidence="3">
    <location>
        <begin position="278"/>
        <end position="299"/>
    </location>
</feature>
<feature type="coiled-coil region" evidence="2">
    <location>
        <begin position="54"/>
        <end position="89"/>
    </location>
</feature>
<feature type="coiled-coil region" evidence="2">
    <location>
        <begin position="222"/>
        <end position="275"/>
    </location>
</feature>
<feature type="compositionally biased region" description="Basic and acidic residues" evidence="3">
    <location>
        <begin position="134"/>
        <end position="151"/>
    </location>
</feature>
<feature type="compositionally biased region" description="Low complexity" evidence="3">
    <location>
        <begin position="187"/>
        <end position="210"/>
    </location>
</feature>
<gene>
    <name type="primary">SPC42</name>
    <name type="ordered locus">ZYRO0E06226g</name>
</gene>
<organism>
    <name type="scientific">Zygosaccharomyces rouxii (strain ATCC 2623 / CBS 732 / NBRC 1130 / NCYC 568 / NRRL Y-229)</name>
    <dbReference type="NCBI Taxonomy" id="559307"/>
    <lineage>
        <taxon>Eukaryota</taxon>
        <taxon>Fungi</taxon>
        <taxon>Dikarya</taxon>
        <taxon>Ascomycota</taxon>
        <taxon>Saccharomycotina</taxon>
        <taxon>Saccharomycetes</taxon>
        <taxon>Saccharomycetales</taxon>
        <taxon>Saccharomycetaceae</taxon>
        <taxon>Zygosaccharomyces</taxon>
    </lineage>
</organism>
<keyword id="KW-0175">Coiled coil</keyword>
<keyword id="KW-0963">Cytoplasm</keyword>
<keyword id="KW-0206">Cytoskeleton</keyword>
<keyword id="KW-0539">Nucleus</keyword>
<keyword id="KW-1185">Reference proteome</keyword>
<comment type="function">
    <text evidence="1">Forms a polymeric layer at the periphery of the spindle pole body (SPB) central plaque which has an essential function during SPB duplication and may facilitate attachment of the SPB to the nuclear membrane.</text>
</comment>
<comment type="subcellular location">
    <subcellularLocation>
        <location evidence="1">Nucleus</location>
    </subcellularLocation>
    <subcellularLocation>
        <location evidence="1">Cytoplasm</location>
        <location evidence="1">Cytoskeleton</location>
        <location evidence="1">Microtubule organizing center</location>
        <location evidence="1">Spindle pole body</location>
    </subcellularLocation>
</comment>
<comment type="similarity">
    <text evidence="4">Belongs to the SPC42 family.</text>
</comment>
<sequence length="373" mass="41921">MNISPTPRRYNSRNGGIDFNDENYLAFSDPVNRDANGNGIGRERIVPEEYKLNSRMINRLIRQNKELMNKLDGKQEEIDRLNVLVGSLRGKLIKYTELNKKLEDRQNVSRSSSGGSNGMETDSNYIQLPKRRNNKDLDKDTDPRLSKDDRISVLSEKLDMLTKIMMESRNSSLASPPPQQQQTANIPTPASAPTAATSSTSPLPPNTSTSVWQRPSEEDIMCRESMELKQLEDQIESLKRKLLIKRENELRKISLSQELLELMGKLSMEQAQVQQGAAGSTATTVPPRTSTAVPSAEQHVSSSSPEFCMECHHTKTHPLHQHHDHNHILRNDLNSRRPTVPAINPLETPTPFAKRASLAASTGDLTDTINRVW</sequence>
<protein>
    <recommendedName>
        <fullName>Spindle pole body component SPC42</fullName>
    </recommendedName>
</protein>
<accession>C5E4H7</accession>
<name>SPC42_ZYGRC</name>